<gene>
    <name type="primary">MT-CYB</name>
    <name type="synonym">COB</name>
    <name type="synonym">CYTB</name>
    <name type="synonym">MTCYB</name>
</gene>
<protein>
    <recommendedName>
        <fullName>Cytochrome b</fullName>
    </recommendedName>
    <alternativeName>
        <fullName>Complex III subunit 3</fullName>
    </alternativeName>
    <alternativeName>
        <fullName>Complex III subunit III</fullName>
    </alternativeName>
    <alternativeName>
        <fullName>Cytochrome b-c1 complex subunit 3</fullName>
    </alternativeName>
    <alternativeName>
        <fullName>Ubiquinol-cytochrome-c reductase complex cytochrome b subunit</fullName>
    </alternativeName>
</protein>
<accession>Q9B7W3</accession>
<feature type="chain" id="PRO_0000061074" description="Cytochrome b">
    <location>
        <begin position="1"/>
        <end position="379"/>
    </location>
</feature>
<feature type="transmembrane region" description="Helical" evidence="2">
    <location>
        <begin position="33"/>
        <end position="53"/>
    </location>
</feature>
<feature type="transmembrane region" description="Helical" evidence="2">
    <location>
        <begin position="77"/>
        <end position="98"/>
    </location>
</feature>
<feature type="transmembrane region" description="Helical" evidence="2">
    <location>
        <begin position="113"/>
        <end position="133"/>
    </location>
</feature>
<feature type="transmembrane region" description="Helical" evidence="2">
    <location>
        <begin position="178"/>
        <end position="198"/>
    </location>
</feature>
<feature type="transmembrane region" description="Helical" evidence="2">
    <location>
        <begin position="226"/>
        <end position="246"/>
    </location>
</feature>
<feature type="transmembrane region" description="Helical" evidence="2">
    <location>
        <begin position="288"/>
        <end position="308"/>
    </location>
</feature>
<feature type="transmembrane region" description="Helical" evidence="2">
    <location>
        <begin position="320"/>
        <end position="340"/>
    </location>
</feature>
<feature type="transmembrane region" description="Helical" evidence="2">
    <location>
        <begin position="347"/>
        <end position="367"/>
    </location>
</feature>
<feature type="binding site" description="axial binding residue" evidence="2">
    <location>
        <position position="83"/>
    </location>
    <ligand>
        <name>heme b</name>
        <dbReference type="ChEBI" id="CHEBI:60344"/>
        <label>b562</label>
    </ligand>
    <ligandPart>
        <name>Fe</name>
        <dbReference type="ChEBI" id="CHEBI:18248"/>
    </ligandPart>
</feature>
<feature type="binding site" description="axial binding residue" evidence="2">
    <location>
        <position position="97"/>
    </location>
    <ligand>
        <name>heme b</name>
        <dbReference type="ChEBI" id="CHEBI:60344"/>
        <label>b566</label>
    </ligand>
    <ligandPart>
        <name>Fe</name>
        <dbReference type="ChEBI" id="CHEBI:18248"/>
    </ligandPart>
</feature>
<feature type="binding site" description="axial binding residue" evidence="2">
    <location>
        <position position="182"/>
    </location>
    <ligand>
        <name>heme b</name>
        <dbReference type="ChEBI" id="CHEBI:60344"/>
        <label>b562</label>
    </ligand>
    <ligandPart>
        <name>Fe</name>
        <dbReference type="ChEBI" id="CHEBI:18248"/>
    </ligandPart>
</feature>
<feature type="binding site" description="axial binding residue" evidence="2">
    <location>
        <position position="196"/>
    </location>
    <ligand>
        <name>heme b</name>
        <dbReference type="ChEBI" id="CHEBI:60344"/>
        <label>b566</label>
    </ligand>
    <ligandPart>
        <name>Fe</name>
        <dbReference type="ChEBI" id="CHEBI:18248"/>
    </ligandPart>
</feature>
<feature type="binding site" evidence="2">
    <location>
        <position position="201"/>
    </location>
    <ligand>
        <name>a ubiquinone</name>
        <dbReference type="ChEBI" id="CHEBI:16389"/>
    </ligand>
</feature>
<sequence>MTNIRKTHPLMKIINNAFVDLPTPSNISSWWNFGSLLGLCLITQILTGLFLAMHYTPDTTTAFSSVTHICRDVNYGWVIRYLHANGASMFFICLYAHVGRGLYYGSYVFQETWNIGVILLFTVMATAFVGYVLPWGQMSFWGATVITNLMSAIPYIGTTLVEWVWGGFSVDKATLTRFFAFHFILPFIILALAMVHLLFLHETGSNNPLGIPSDMDKIPFHPYYTIKDILGALLLISALLTLTLFAPDLLGDPDNYTPANPLSTPAHIKPEWYFLFAYAILRSIPNKLGGVMALLLSILVLMLIPMLHTSKQRSMMFRPFSQFLFWVLVADLLTLTWIGGQPVEHPYMTLGQLASTLYFLLILVLMPLTSLIENKLLKW</sequence>
<geneLocation type="mitochondrion"/>
<reference key="1">
    <citation type="journal article" date="2001" name="Proc. R. Soc. B">
        <title>Evolution of river dolphins.</title>
        <authorList>
            <person name="Hamilton H."/>
            <person name="Caballero S."/>
            <person name="Collins A.G."/>
            <person name="Brownell R.L. Jr."/>
        </authorList>
    </citation>
    <scope>NUCLEOTIDE SEQUENCE [GENOMIC DNA]</scope>
</reference>
<name>CYB_KOGSI</name>
<comment type="function">
    <text evidence="2">Component of the ubiquinol-cytochrome c reductase complex (complex III or cytochrome b-c1 complex) that is part of the mitochondrial respiratory chain. The b-c1 complex mediates electron transfer from ubiquinol to cytochrome c. Contributes to the generation of a proton gradient across the mitochondrial membrane that is then used for ATP synthesis.</text>
</comment>
<comment type="cofactor">
    <cofactor evidence="2">
        <name>heme b</name>
        <dbReference type="ChEBI" id="CHEBI:60344"/>
    </cofactor>
    <text evidence="2">Binds 2 heme b groups non-covalently.</text>
</comment>
<comment type="subunit">
    <text evidence="2">The cytochrome bc1 complex contains 11 subunits: 3 respiratory subunits (MT-CYB, CYC1 and UQCRFS1), 2 core proteins (UQCRC1 and UQCRC2) and 6 low-molecular weight proteins (UQCRH/QCR6, UQCRB/QCR7, UQCRQ/QCR8, UQCR10/QCR9, UQCR11/QCR10 and a cleavage product of UQCRFS1). This cytochrome bc1 complex then forms a dimer.</text>
</comment>
<comment type="subcellular location">
    <subcellularLocation>
        <location evidence="2">Mitochondrion inner membrane</location>
        <topology evidence="2">Multi-pass membrane protein</topology>
    </subcellularLocation>
</comment>
<comment type="miscellaneous">
    <text evidence="1">Heme 1 (or BL or b562) is low-potential and absorbs at about 562 nm, and heme 2 (or BH or b566) is high-potential and absorbs at about 566 nm.</text>
</comment>
<comment type="similarity">
    <text evidence="3 4">Belongs to the cytochrome b family.</text>
</comment>
<comment type="caution">
    <text evidence="2">The full-length protein contains only eight transmembrane helices, not nine as predicted by bioinformatics tools.</text>
</comment>
<organism>
    <name type="scientific">Kogia sima</name>
    <name type="common">Dwarf sperm whale</name>
    <name type="synonym">Physeter simus</name>
    <dbReference type="NCBI Taxonomy" id="9752"/>
    <lineage>
        <taxon>Eukaryota</taxon>
        <taxon>Metazoa</taxon>
        <taxon>Chordata</taxon>
        <taxon>Craniata</taxon>
        <taxon>Vertebrata</taxon>
        <taxon>Euteleostomi</taxon>
        <taxon>Mammalia</taxon>
        <taxon>Eutheria</taxon>
        <taxon>Laurasiatheria</taxon>
        <taxon>Artiodactyla</taxon>
        <taxon>Whippomorpha</taxon>
        <taxon>Cetacea</taxon>
        <taxon>Odontoceti</taxon>
        <taxon>Physeteridae</taxon>
        <taxon>Kogia</taxon>
    </lineage>
</organism>
<evidence type="ECO:0000250" key="1"/>
<evidence type="ECO:0000250" key="2">
    <source>
        <dbReference type="UniProtKB" id="P00157"/>
    </source>
</evidence>
<evidence type="ECO:0000255" key="3">
    <source>
        <dbReference type="PROSITE-ProRule" id="PRU00967"/>
    </source>
</evidence>
<evidence type="ECO:0000255" key="4">
    <source>
        <dbReference type="PROSITE-ProRule" id="PRU00968"/>
    </source>
</evidence>
<dbReference type="EMBL" id="AF334482">
    <property type="protein sequence ID" value="AAK01723.1"/>
    <property type="molecule type" value="Genomic_DNA"/>
</dbReference>
<dbReference type="SMR" id="Q9B7W3"/>
<dbReference type="GO" id="GO:0005743">
    <property type="term" value="C:mitochondrial inner membrane"/>
    <property type="evidence" value="ECO:0007669"/>
    <property type="project" value="UniProtKB-SubCell"/>
</dbReference>
<dbReference type="GO" id="GO:0045275">
    <property type="term" value="C:respiratory chain complex III"/>
    <property type="evidence" value="ECO:0007669"/>
    <property type="project" value="InterPro"/>
</dbReference>
<dbReference type="GO" id="GO:0046872">
    <property type="term" value="F:metal ion binding"/>
    <property type="evidence" value="ECO:0007669"/>
    <property type="project" value="UniProtKB-KW"/>
</dbReference>
<dbReference type="GO" id="GO:0008121">
    <property type="term" value="F:ubiquinol-cytochrome-c reductase activity"/>
    <property type="evidence" value="ECO:0007669"/>
    <property type="project" value="InterPro"/>
</dbReference>
<dbReference type="GO" id="GO:0006122">
    <property type="term" value="P:mitochondrial electron transport, ubiquinol to cytochrome c"/>
    <property type="evidence" value="ECO:0007669"/>
    <property type="project" value="TreeGrafter"/>
</dbReference>
<dbReference type="CDD" id="cd00290">
    <property type="entry name" value="cytochrome_b_C"/>
    <property type="match status" value="1"/>
</dbReference>
<dbReference type="CDD" id="cd00284">
    <property type="entry name" value="Cytochrome_b_N"/>
    <property type="match status" value="1"/>
</dbReference>
<dbReference type="FunFam" id="1.20.810.10:FF:000002">
    <property type="entry name" value="Cytochrome b"/>
    <property type="match status" value="1"/>
</dbReference>
<dbReference type="Gene3D" id="1.20.810.10">
    <property type="entry name" value="Cytochrome Bc1 Complex, Chain C"/>
    <property type="match status" value="1"/>
</dbReference>
<dbReference type="InterPro" id="IPR005798">
    <property type="entry name" value="Cyt_b/b6_C"/>
</dbReference>
<dbReference type="InterPro" id="IPR036150">
    <property type="entry name" value="Cyt_b/b6_C_sf"/>
</dbReference>
<dbReference type="InterPro" id="IPR005797">
    <property type="entry name" value="Cyt_b/b6_N"/>
</dbReference>
<dbReference type="InterPro" id="IPR027387">
    <property type="entry name" value="Cytb/b6-like_sf"/>
</dbReference>
<dbReference type="InterPro" id="IPR030689">
    <property type="entry name" value="Cytochrome_b"/>
</dbReference>
<dbReference type="InterPro" id="IPR048260">
    <property type="entry name" value="Cytochrome_b_C_euk/bac"/>
</dbReference>
<dbReference type="InterPro" id="IPR048259">
    <property type="entry name" value="Cytochrome_b_N_euk/bac"/>
</dbReference>
<dbReference type="InterPro" id="IPR016174">
    <property type="entry name" value="Di-haem_cyt_TM"/>
</dbReference>
<dbReference type="PANTHER" id="PTHR19271">
    <property type="entry name" value="CYTOCHROME B"/>
    <property type="match status" value="1"/>
</dbReference>
<dbReference type="PANTHER" id="PTHR19271:SF16">
    <property type="entry name" value="CYTOCHROME B"/>
    <property type="match status" value="1"/>
</dbReference>
<dbReference type="Pfam" id="PF00032">
    <property type="entry name" value="Cytochrom_B_C"/>
    <property type="match status" value="1"/>
</dbReference>
<dbReference type="Pfam" id="PF00033">
    <property type="entry name" value="Cytochrome_B"/>
    <property type="match status" value="1"/>
</dbReference>
<dbReference type="PIRSF" id="PIRSF038885">
    <property type="entry name" value="COB"/>
    <property type="match status" value="1"/>
</dbReference>
<dbReference type="SUPFAM" id="SSF81648">
    <property type="entry name" value="a domain/subunit of cytochrome bc1 complex (Ubiquinol-cytochrome c reductase)"/>
    <property type="match status" value="1"/>
</dbReference>
<dbReference type="SUPFAM" id="SSF81342">
    <property type="entry name" value="Transmembrane di-heme cytochromes"/>
    <property type="match status" value="1"/>
</dbReference>
<dbReference type="PROSITE" id="PS51003">
    <property type="entry name" value="CYTB_CTER"/>
    <property type="match status" value="1"/>
</dbReference>
<dbReference type="PROSITE" id="PS51002">
    <property type="entry name" value="CYTB_NTER"/>
    <property type="match status" value="1"/>
</dbReference>
<keyword id="KW-0249">Electron transport</keyword>
<keyword id="KW-0349">Heme</keyword>
<keyword id="KW-0408">Iron</keyword>
<keyword id="KW-0472">Membrane</keyword>
<keyword id="KW-0479">Metal-binding</keyword>
<keyword id="KW-0496">Mitochondrion</keyword>
<keyword id="KW-0999">Mitochondrion inner membrane</keyword>
<keyword id="KW-0679">Respiratory chain</keyword>
<keyword id="KW-0812">Transmembrane</keyword>
<keyword id="KW-1133">Transmembrane helix</keyword>
<keyword id="KW-0813">Transport</keyword>
<keyword id="KW-0830">Ubiquinone</keyword>
<proteinExistence type="inferred from homology"/>